<proteinExistence type="evidence at protein level"/>
<feature type="chain" id="PRO_0000059131" description="Polypeptide N-acetylgalactosaminyltransferase 13">
    <location>
        <begin position="1"/>
        <end position="556"/>
    </location>
</feature>
<feature type="topological domain" description="Cytoplasmic" evidence="4">
    <location>
        <begin position="1"/>
        <end position="4"/>
    </location>
</feature>
<feature type="transmembrane region" description="Helical; Signal-anchor for type II membrane protein" evidence="4">
    <location>
        <begin position="5"/>
        <end position="27"/>
    </location>
</feature>
<feature type="topological domain" description="Lumenal" evidence="4">
    <location>
        <begin position="28"/>
        <end position="556"/>
    </location>
</feature>
<feature type="domain" description="Ricin B-type lectin" evidence="5">
    <location>
        <begin position="428"/>
        <end position="550"/>
    </location>
</feature>
<feature type="region of interest" description="Catalytic subdomain A">
    <location>
        <begin position="114"/>
        <end position="224"/>
    </location>
</feature>
<feature type="region of interest" description="Catalytic subdomain B">
    <location>
        <begin position="284"/>
        <end position="346"/>
    </location>
</feature>
<feature type="binding site" evidence="2">
    <location>
        <position position="155"/>
    </location>
    <ligand>
        <name>substrate</name>
    </ligand>
</feature>
<feature type="binding site" evidence="2">
    <location>
        <position position="185"/>
    </location>
    <ligand>
        <name>substrate</name>
    </ligand>
</feature>
<feature type="binding site" evidence="2">
    <location>
        <position position="208"/>
    </location>
    <ligand>
        <name>Mn(2+)</name>
        <dbReference type="ChEBI" id="CHEBI:29035"/>
    </ligand>
</feature>
<feature type="binding site" evidence="2">
    <location>
        <position position="210"/>
    </location>
    <ligand>
        <name>Mn(2+)</name>
        <dbReference type="ChEBI" id="CHEBI:29035"/>
    </ligand>
</feature>
<feature type="binding site" evidence="2">
    <location>
        <position position="315"/>
    </location>
    <ligand>
        <name>substrate</name>
    </ligand>
</feature>
<feature type="binding site" evidence="2">
    <location>
        <position position="343"/>
    </location>
    <ligand>
        <name>Mn(2+)</name>
        <dbReference type="ChEBI" id="CHEBI:29035"/>
    </ligand>
</feature>
<feature type="binding site" evidence="2">
    <location>
        <position position="346"/>
    </location>
    <ligand>
        <name>substrate</name>
    </ligand>
</feature>
<feature type="binding site" evidence="2">
    <location>
        <position position="351"/>
    </location>
    <ligand>
        <name>substrate</name>
    </ligand>
</feature>
<feature type="glycosylation site" description="N-linked (GlcNAc...) asparagine" evidence="4">
    <location>
        <position position="94"/>
    </location>
</feature>
<feature type="glycosylation site" description="N-linked (GlcNAc...) asparagine" evidence="4">
    <location>
        <position position="116"/>
    </location>
</feature>
<feature type="glycosylation site" description="N-linked (GlcNAc...) asparagine" evidence="4">
    <location>
        <position position="551"/>
    </location>
</feature>
<feature type="disulfide bond" evidence="5">
    <location>
        <begin position="105"/>
        <end position="338"/>
    </location>
</feature>
<feature type="disulfide bond" evidence="5">
    <location>
        <begin position="329"/>
        <end position="407"/>
    </location>
</feature>
<feature type="disulfide bond" evidence="5">
    <location>
        <begin position="441"/>
        <end position="458"/>
    </location>
</feature>
<feature type="disulfide bond" evidence="5">
    <location>
        <begin position="481"/>
        <end position="496"/>
    </location>
</feature>
<feature type="disulfide bond" evidence="5">
    <location>
        <begin position="522"/>
        <end position="539"/>
    </location>
</feature>
<feature type="splice variant" id="VSP_011220" description="In isoform 2." evidence="10">
    <original>V</original>
    <variation>VHDLCLSAPSLGVGAEECCSNHPLYGLVYTPTINEQV</variation>
    <location>
        <position position="466"/>
    </location>
</feature>
<feature type="sequence conflict" description="In Ref. 2; BAC32353." evidence="11" ref="2">
    <original>N</original>
    <variation>K</variation>
    <location>
        <position position="457"/>
    </location>
</feature>
<dbReference type="EC" id="2.4.1.41" evidence="13 14"/>
<dbReference type="EMBL" id="AB082928">
    <property type="protein sequence ID" value="BAC54546.1"/>
    <property type="molecule type" value="mRNA"/>
</dbReference>
<dbReference type="EMBL" id="AK038387">
    <property type="protein sequence ID" value="BAC29981.1"/>
    <property type="molecule type" value="mRNA"/>
</dbReference>
<dbReference type="EMBL" id="AK045417">
    <property type="protein sequence ID" value="BAC32353.1"/>
    <property type="molecule type" value="mRNA"/>
</dbReference>
<dbReference type="CCDS" id="CCDS16041.1">
    <molecule id="Q8CF93-1"/>
</dbReference>
<dbReference type="RefSeq" id="NP_766618.2">
    <molecule id="Q8CF93-1"/>
    <property type="nucleotide sequence ID" value="NM_173030.2"/>
</dbReference>
<dbReference type="RefSeq" id="XP_006498154.1">
    <molecule id="Q8CF93-1"/>
    <property type="nucleotide sequence ID" value="XM_006498091.4"/>
</dbReference>
<dbReference type="RefSeq" id="XP_006498155.1">
    <molecule id="Q8CF93-1"/>
    <property type="nucleotide sequence ID" value="XM_006498092.3"/>
</dbReference>
<dbReference type="RefSeq" id="XP_036018154.1">
    <molecule id="Q8CF93-1"/>
    <property type="nucleotide sequence ID" value="XM_036162261.1"/>
</dbReference>
<dbReference type="SMR" id="Q8CF93"/>
<dbReference type="FunCoup" id="Q8CF93">
    <property type="interactions" value="842"/>
</dbReference>
<dbReference type="STRING" id="10090.ENSMUSP00000108254"/>
<dbReference type="CAZy" id="CBM13">
    <property type="family name" value="Carbohydrate-Binding Module Family 13"/>
</dbReference>
<dbReference type="CAZy" id="GT27">
    <property type="family name" value="Glycosyltransferase Family 27"/>
</dbReference>
<dbReference type="GlyCosmos" id="Q8CF93">
    <property type="glycosylation" value="3 sites, No reported glycans"/>
</dbReference>
<dbReference type="GlyGen" id="Q8CF93">
    <property type="glycosylation" value="4 sites, 1 N-linked glycan (1 site), 1 O-linked glycan (1 site)"/>
</dbReference>
<dbReference type="iPTMnet" id="Q8CF93"/>
<dbReference type="PhosphoSitePlus" id="Q8CF93"/>
<dbReference type="PaxDb" id="10090-ENSMUSP00000108253"/>
<dbReference type="ProteomicsDB" id="271019">
    <molecule id="Q8CF93-1"/>
</dbReference>
<dbReference type="ProteomicsDB" id="271020">
    <molecule id="Q8CF93-2"/>
</dbReference>
<dbReference type="Antibodypedia" id="33696">
    <property type="antibodies" value="150 antibodies from 19 providers"/>
</dbReference>
<dbReference type="DNASU" id="271786"/>
<dbReference type="Ensembl" id="ENSMUST00000068595.6">
    <molecule id="Q8CF93-1"/>
    <property type="protein sequence ID" value="ENSMUSP00000063464.6"/>
    <property type="gene ID" value="ENSMUSG00000060988.13"/>
</dbReference>
<dbReference type="Ensembl" id="ENSMUST00000112634.8">
    <molecule id="Q8CF93-2"/>
    <property type="protein sequence ID" value="ENSMUSP00000108253.2"/>
    <property type="gene ID" value="ENSMUSG00000060988.13"/>
</dbReference>
<dbReference type="Ensembl" id="ENSMUST00000112635.8">
    <molecule id="Q8CF93-1"/>
    <property type="protein sequence ID" value="ENSMUSP00000108254.2"/>
    <property type="gene ID" value="ENSMUSG00000060988.13"/>
</dbReference>
<dbReference type="Ensembl" id="ENSMUST00000112636.8">
    <molecule id="Q8CF93-1"/>
    <property type="protein sequence ID" value="ENSMUSP00000108255.2"/>
    <property type="gene ID" value="ENSMUSG00000060988.13"/>
</dbReference>
<dbReference type="GeneID" id="271786"/>
<dbReference type="KEGG" id="mmu:271786"/>
<dbReference type="UCSC" id="uc008jrq.1">
    <molecule id="Q8CF93-1"/>
    <property type="organism name" value="mouse"/>
</dbReference>
<dbReference type="UCSC" id="uc012bvm.1">
    <molecule id="Q8CF93-2"/>
    <property type="organism name" value="mouse"/>
</dbReference>
<dbReference type="AGR" id="MGI:2139447"/>
<dbReference type="CTD" id="114805"/>
<dbReference type="MGI" id="MGI:2139447">
    <property type="gene designation" value="Galnt13"/>
</dbReference>
<dbReference type="VEuPathDB" id="HostDB:ENSMUSG00000060988"/>
<dbReference type="eggNOG" id="KOG3736">
    <property type="taxonomic scope" value="Eukaryota"/>
</dbReference>
<dbReference type="GeneTree" id="ENSGT00940000158904"/>
<dbReference type="HOGENOM" id="CLU_013477_0_1_1"/>
<dbReference type="InParanoid" id="Q8CF93"/>
<dbReference type="OMA" id="PTVEACD"/>
<dbReference type="TreeFam" id="TF313267"/>
<dbReference type="BRENDA" id="2.4.1.41">
    <property type="organism ID" value="3474"/>
</dbReference>
<dbReference type="Reactome" id="R-MMU-913709">
    <property type="pathway name" value="O-linked glycosylation of mucins"/>
</dbReference>
<dbReference type="UniPathway" id="UPA00378"/>
<dbReference type="BioGRID-ORCS" id="271786">
    <property type="hits" value="0 hits in 76 CRISPR screens"/>
</dbReference>
<dbReference type="ChiTaRS" id="Galnt13">
    <property type="organism name" value="mouse"/>
</dbReference>
<dbReference type="PRO" id="PR:Q8CF93"/>
<dbReference type="Proteomes" id="UP000000589">
    <property type="component" value="Chromosome 2"/>
</dbReference>
<dbReference type="RNAct" id="Q8CF93">
    <property type="molecule type" value="protein"/>
</dbReference>
<dbReference type="Bgee" id="ENSMUSG00000060988">
    <property type="expression patterns" value="Expressed in cerebellum lobe and 102 other cell types or tissues"/>
</dbReference>
<dbReference type="ExpressionAtlas" id="Q8CF93">
    <property type="expression patterns" value="baseline and differential"/>
</dbReference>
<dbReference type="GO" id="GO:0000139">
    <property type="term" value="C:Golgi membrane"/>
    <property type="evidence" value="ECO:0007669"/>
    <property type="project" value="UniProtKB-SubCell"/>
</dbReference>
<dbReference type="GO" id="GO:0030246">
    <property type="term" value="F:carbohydrate binding"/>
    <property type="evidence" value="ECO:0007669"/>
    <property type="project" value="UniProtKB-KW"/>
</dbReference>
<dbReference type="GO" id="GO:0046872">
    <property type="term" value="F:metal ion binding"/>
    <property type="evidence" value="ECO:0007669"/>
    <property type="project" value="UniProtKB-KW"/>
</dbReference>
<dbReference type="GO" id="GO:0004653">
    <property type="term" value="F:polypeptide N-acetylgalactosaminyltransferase activity"/>
    <property type="evidence" value="ECO:0000314"/>
    <property type="project" value="MGI"/>
</dbReference>
<dbReference type="GO" id="GO:0006493">
    <property type="term" value="P:protein O-linked glycosylation"/>
    <property type="evidence" value="ECO:0000314"/>
    <property type="project" value="MGI"/>
</dbReference>
<dbReference type="GO" id="GO:0018242">
    <property type="term" value="P:protein O-linked glycosylation via serine"/>
    <property type="evidence" value="ECO:0007669"/>
    <property type="project" value="Ensembl"/>
</dbReference>
<dbReference type="GO" id="GO:0018243">
    <property type="term" value="P:protein O-linked glycosylation via threonine"/>
    <property type="evidence" value="ECO:0007669"/>
    <property type="project" value="Ensembl"/>
</dbReference>
<dbReference type="CDD" id="cd23467">
    <property type="entry name" value="beta-trefoil_Ricin_GALNT13"/>
    <property type="match status" value="1"/>
</dbReference>
<dbReference type="CDD" id="cd02510">
    <property type="entry name" value="pp-GalNAc-T"/>
    <property type="match status" value="1"/>
</dbReference>
<dbReference type="FunFam" id="2.80.10.50:FF:000014">
    <property type="entry name" value="Polypeptide N-acetylgalactosaminyltransferase"/>
    <property type="match status" value="1"/>
</dbReference>
<dbReference type="FunFam" id="3.90.550.10:FF:000005">
    <property type="entry name" value="Polypeptide N-acetylgalactosaminyltransferase"/>
    <property type="match status" value="1"/>
</dbReference>
<dbReference type="Gene3D" id="2.80.10.50">
    <property type="match status" value="1"/>
</dbReference>
<dbReference type="Gene3D" id="3.90.550.10">
    <property type="entry name" value="Spore Coat Polysaccharide Biosynthesis Protein SpsA, Chain A"/>
    <property type="match status" value="1"/>
</dbReference>
<dbReference type="InterPro" id="IPR045885">
    <property type="entry name" value="GalNAc-T"/>
</dbReference>
<dbReference type="InterPro" id="IPR001173">
    <property type="entry name" value="Glyco_trans_2-like"/>
</dbReference>
<dbReference type="InterPro" id="IPR029044">
    <property type="entry name" value="Nucleotide-diphossugar_trans"/>
</dbReference>
<dbReference type="InterPro" id="IPR035992">
    <property type="entry name" value="Ricin_B-like_lectins"/>
</dbReference>
<dbReference type="InterPro" id="IPR000772">
    <property type="entry name" value="Ricin_B_lectin"/>
</dbReference>
<dbReference type="PANTHER" id="PTHR11675">
    <property type="entry name" value="N-ACETYLGALACTOSAMINYLTRANSFERASE"/>
    <property type="match status" value="1"/>
</dbReference>
<dbReference type="PANTHER" id="PTHR11675:SF47">
    <property type="entry name" value="POLYPEPTIDE N-ACETYLGALACTOSAMINYLTRANSFERASE 13"/>
    <property type="match status" value="1"/>
</dbReference>
<dbReference type="Pfam" id="PF00535">
    <property type="entry name" value="Glycos_transf_2"/>
    <property type="match status" value="1"/>
</dbReference>
<dbReference type="Pfam" id="PF00652">
    <property type="entry name" value="Ricin_B_lectin"/>
    <property type="match status" value="1"/>
</dbReference>
<dbReference type="SMART" id="SM00458">
    <property type="entry name" value="RICIN"/>
    <property type="match status" value="1"/>
</dbReference>
<dbReference type="SUPFAM" id="SSF53448">
    <property type="entry name" value="Nucleotide-diphospho-sugar transferases"/>
    <property type="match status" value="1"/>
</dbReference>
<dbReference type="SUPFAM" id="SSF50370">
    <property type="entry name" value="Ricin B-like lectins"/>
    <property type="match status" value="1"/>
</dbReference>
<dbReference type="PROSITE" id="PS50231">
    <property type="entry name" value="RICIN_B_LECTIN"/>
    <property type="match status" value="1"/>
</dbReference>
<evidence type="ECO:0000250" key="1"/>
<evidence type="ECO:0000250" key="2">
    <source>
        <dbReference type="UniProtKB" id="Q10471"/>
    </source>
</evidence>
<evidence type="ECO:0000250" key="3">
    <source>
        <dbReference type="UniProtKB" id="Q8IUC8"/>
    </source>
</evidence>
<evidence type="ECO:0000255" key="4"/>
<evidence type="ECO:0000255" key="5">
    <source>
        <dbReference type="PROSITE-ProRule" id="PRU00174"/>
    </source>
</evidence>
<evidence type="ECO:0000269" key="6">
    <source>
    </source>
</evidence>
<evidence type="ECO:0000269" key="7">
    <source>
    </source>
</evidence>
<evidence type="ECO:0000269" key="8">
    <source>
    </source>
</evidence>
<evidence type="ECO:0000269" key="9">
    <source>
    </source>
</evidence>
<evidence type="ECO:0000303" key="10">
    <source>
    </source>
</evidence>
<evidence type="ECO:0000305" key="11"/>
<evidence type="ECO:0000305" key="12">
    <source>
    </source>
</evidence>
<evidence type="ECO:0000305" key="13">
    <source>
    </source>
</evidence>
<evidence type="ECO:0000305" key="14">
    <source>
    </source>
</evidence>
<organism>
    <name type="scientific">Mus musculus</name>
    <name type="common">Mouse</name>
    <dbReference type="NCBI Taxonomy" id="10090"/>
    <lineage>
        <taxon>Eukaryota</taxon>
        <taxon>Metazoa</taxon>
        <taxon>Chordata</taxon>
        <taxon>Craniata</taxon>
        <taxon>Vertebrata</taxon>
        <taxon>Euteleostomi</taxon>
        <taxon>Mammalia</taxon>
        <taxon>Eutheria</taxon>
        <taxon>Euarchontoglires</taxon>
        <taxon>Glires</taxon>
        <taxon>Rodentia</taxon>
        <taxon>Myomorpha</taxon>
        <taxon>Muroidea</taxon>
        <taxon>Muridae</taxon>
        <taxon>Murinae</taxon>
        <taxon>Mus</taxon>
        <taxon>Mus</taxon>
    </lineage>
</organism>
<name>GLT13_MOUSE</name>
<comment type="function">
    <text evidence="3 6 8 9">Catalyzes the initial reaction in O-linked oligosaccharide biosynthesis, the transfer of an N-acetyl-D-galactosamine (GalNAc) residue from UDP-GalNAc to a serine or threonine residue on the protein receptor (PubMed:12407114, PubMed:27629416, PubMed:8618846). Generates GalNAc-O-Ser/Thr structure also known as Tn antigen, which itself is immunogenic but also serves as a precursor for the synthesis of different mucin-type O-glycan core structures (PubMed:12407114). Contributes to the synthesis of O-linked glycans on mucins and proteoglycans of the central nervous system (PubMed:12407114, PubMed:27629416). Can glycosylate both unmodified peptides and glycopeptides that already contain an O-linked GalNAc sugar. Transfers GalNAc to Thr-/Ser-rich tandem repeats GTTPSPVPTTSTTSAP of MUC5AC. Transfers GalNAc to three consecutive serine/threonine residues on SDC3 forming a triplet-Tn epitope expressed in Purkinje cells of the developing brain (By similarity). May promote neurogenesis through glycosylation and stabilization of PDPN (PubMed:27629416).</text>
</comment>
<comment type="catalytic activity">
    <reaction evidence="13 14">
        <text>L-seryl-[protein] + UDP-N-acetyl-alpha-D-galactosamine = a 3-O-[N-acetyl-alpha-D-galactosaminyl]-L-seryl-[protein] + UDP + H(+)</text>
        <dbReference type="Rhea" id="RHEA:23956"/>
        <dbReference type="Rhea" id="RHEA-COMP:9863"/>
        <dbReference type="Rhea" id="RHEA-COMP:12788"/>
        <dbReference type="ChEBI" id="CHEBI:15378"/>
        <dbReference type="ChEBI" id="CHEBI:29999"/>
        <dbReference type="ChEBI" id="CHEBI:53604"/>
        <dbReference type="ChEBI" id="CHEBI:58223"/>
        <dbReference type="ChEBI" id="CHEBI:67138"/>
        <dbReference type="EC" id="2.4.1.41"/>
    </reaction>
</comment>
<comment type="catalytic activity">
    <reaction evidence="13 14">
        <text>L-threonyl-[protein] + UDP-N-acetyl-alpha-D-galactosamine = a 3-O-[N-acetyl-alpha-D-galactosaminyl]-L-threonyl-[protein] + UDP + H(+)</text>
        <dbReference type="Rhea" id="RHEA:52424"/>
        <dbReference type="Rhea" id="RHEA-COMP:11060"/>
        <dbReference type="Rhea" id="RHEA-COMP:11689"/>
        <dbReference type="ChEBI" id="CHEBI:15378"/>
        <dbReference type="ChEBI" id="CHEBI:30013"/>
        <dbReference type="ChEBI" id="CHEBI:58223"/>
        <dbReference type="ChEBI" id="CHEBI:67138"/>
        <dbReference type="ChEBI" id="CHEBI:87075"/>
        <dbReference type="EC" id="2.4.1.41"/>
    </reaction>
</comment>
<comment type="cofactor">
    <cofactor evidence="1">
        <name>Mn(2+)</name>
        <dbReference type="ChEBI" id="CHEBI:29035"/>
    </cofactor>
</comment>
<comment type="pathway">
    <text evidence="12">Protein modification; protein glycosylation.</text>
</comment>
<comment type="subcellular location">
    <subcellularLocation>
        <location evidence="1">Golgi apparatus membrane</location>
        <topology evidence="1">Single-pass type II membrane protein</topology>
    </subcellularLocation>
</comment>
<comment type="alternative products">
    <event type="alternative splicing"/>
    <isoform>
        <id>Q8CF93-1</id>
        <name>1</name>
        <sequence type="displayed"/>
    </isoform>
    <isoform>
        <id>Q8CF93-2</id>
        <name>2</name>
        <sequence type="described" ref="VSP_011220"/>
    </isoform>
</comment>
<comment type="tissue specificity">
    <text evidence="6 7">Specifically expressed in neuronal cells. Not expressed in glial cells such as astrocytes. Expressed at low level.</text>
</comment>
<comment type="developmental stage">
    <text evidence="8">Expressed at high levels in the developing brain, reaching a peak at 17.5 dpc, followed by a decrease at 19.5 dpc. Highly expressed during the postnatal period. Expressed in cortical neural precursor cells at 17.5 dpc.</text>
</comment>
<comment type="domain">
    <text evidence="1">There are two conserved domains in the glycosyltransferase region: the N-terminal domain (domain A, also called GT1 motif), which is probably involved in manganese coordination and substrate binding and the C-terminal domain (domain B, also called Gal/GalNAc-T motif), which is probably involved in catalytic reaction and UDP-Gal binding.</text>
</comment>
<comment type="domain">
    <text evidence="1">The ricin B-type lectin domain binds to GalNAc and contributes to the glycopeptide specificity.</text>
</comment>
<comment type="disruption phenotype">
    <text evidence="9">No visible phenotype. It however abolishes Tn antigen in neuronal cells.</text>
</comment>
<comment type="similarity">
    <text evidence="11">Belongs to the glycosyltransferase 2 family. GalNAc-T subfamily.</text>
</comment>
<comment type="caution">
    <text evidence="11">Was initially wrongly assigned as Galnt8.</text>
</comment>
<comment type="online information" name="Functional Glycomics Gateway - GTase">
    <link uri="http://www.functionalglycomics.org/glycomics/molecule/jsp/glycoEnzyme/viewGlycoEnzyme.jsp?gbpId=gt_mou_521"/>
    <text>Polypeptide N-acetylgalactosaminyltransferase 13</text>
</comment>
<sequence>MRRFVYCKVVLATSLMWVLVDVFLLLYFSECNKCDDKKERSLLPALRAVISRNQEGPGEMGKAVLIPKDDQEKMKELFKINQFNLMASDLIALNRSLPDVRLEGCKTKVYPDELPNTSVVIVFHNEAWSTLLRTVYSVINRSPHYLLSEVILVDDASERDFLKLTLENYVKTLEVPVKIIRMEERSGLIRARLRGAAASKGQVITFLDAHCECTLGWLEPLLARIKEDRKTVVCPIIDVISDDTFEYMAGSDMTYGGFNWKLNFRWYPVPQREMDRRKGDRTLPVRTPTMAGGLFSIDRNYFEEIGTYDAGMDIWGGENLEMSFRIWQCGGSLEIVTCSHVGHVFRKATPYTFPGGTGHVINKNNRRLAEVWMDEFKDFFYIISPGVVKVDYGDVSVRKTLRENLKCKPFSWYLENIYPDSQIPRRYYSLGEIRNVETNQCLDNMGRKENEKVGIFNCHGMGGNQVFSYTADKEIRTDDLCLDVSRLSGPVIMLKCHHMRGNQLWEYDAERLTLRHANSNQCLDEPSEEDKMVPTMQDCSGSRSQQWLLRNMTLGT</sequence>
<protein>
    <recommendedName>
        <fullName>Polypeptide N-acetylgalactosaminyltransferase 13</fullName>
        <ecNumber evidence="13 14">2.4.1.41</ecNumber>
    </recommendedName>
    <alternativeName>
        <fullName>Polypeptide GalNAc transferase 13</fullName>
        <shortName>GalNAc-T13</shortName>
        <shortName>pp-GaNTase 13</shortName>
    </alternativeName>
    <alternativeName>
        <fullName>Protein-UDP acetylgalactosaminyltransferase 13</fullName>
    </alternativeName>
    <alternativeName>
        <fullName>UDP-GalNAc:polypeptide N-acetylgalactosaminyltransferase 13</fullName>
    </alternativeName>
</protein>
<accession>Q8CF93</accession>
<accession>Q8BLE4</accession>
<accession>Q8BYT3</accession>
<gene>
    <name type="primary">Galnt13</name>
</gene>
<reference key="1">
    <citation type="journal article" date="2003" name="J. Biol. Chem.">
        <title>Cloning and characterization of a new human UDP-N-acetyl-alpha-D-galactosamine:polypeptide N-acetylgalactosaminyltransferase, designated pp-GalNAc-T13, that is specifically expressed in neurons and synthesizes GalNAc alpha-serine/threonine antigen.</title>
        <authorList>
            <person name="Zhang Y."/>
            <person name="Iwasaki H."/>
            <person name="Wang H."/>
            <person name="Kudo T."/>
            <person name="Kalka T.B."/>
            <person name="Hennet T."/>
            <person name="Kubota T."/>
            <person name="Cheng L."/>
            <person name="Inaba N."/>
            <person name="Gotoh M."/>
            <person name="Togayachi A."/>
            <person name="Guo J.-M."/>
            <person name="Hisatomi H."/>
            <person name="Nakajima K."/>
            <person name="Nishihara S."/>
            <person name="Nakamura M."/>
            <person name="Marth J.D."/>
            <person name="Narimatsu H."/>
        </authorList>
    </citation>
    <scope>NUCLEOTIDE SEQUENCE [MRNA] (ISOFORM 1)</scope>
    <scope>FUNCTION</scope>
    <scope>PATHWAY</scope>
    <scope>TISSUE SPECIFICITY</scope>
    <source>
        <tissue>Brain</tissue>
    </source>
</reference>
<reference key="2">
    <citation type="journal article" date="2005" name="Science">
        <title>The transcriptional landscape of the mammalian genome.</title>
        <authorList>
            <person name="Carninci P."/>
            <person name="Kasukawa T."/>
            <person name="Katayama S."/>
            <person name="Gough J."/>
            <person name="Frith M.C."/>
            <person name="Maeda N."/>
            <person name="Oyama R."/>
            <person name="Ravasi T."/>
            <person name="Lenhard B."/>
            <person name="Wells C."/>
            <person name="Kodzius R."/>
            <person name="Shimokawa K."/>
            <person name="Bajic V.B."/>
            <person name="Brenner S.E."/>
            <person name="Batalov S."/>
            <person name="Forrest A.R."/>
            <person name="Zavolan M."/>
            <person name="Davis M.J."/>
            <person name="Wilming L.G."/>
            <person name="Aidinis V."/>
            <person name="Allen J.E."/>
            <person name="Ambesi-Impiombato A."/>
            <person name="Apweiler R."/>
            <person name="Aturaliya R.N."/>
            <person name="Bailey T.L."/>
            <person name="Bansal M."/>
            <person name="Baxter L."/>
            <person name="Beisel K.W."/>
            <person name="Bersano T."/>
            <person name="Bono H."/>
            <person name="Chalk A.M."/>
            <person name="Chiu K.P."/>
            <person name="Choudhary V."/>
            <person name="Christoffels A."/>
            <person name="Clutterbuck D.R."/>
            <person name="Crowe M.L."/>
            <person name="Dalla E."/>
            <person name="Dalrymple B.P."/>
            <person name="de Bono B."/>
            <person name="Della Gatta G."/>
            <person name="di Bernardo D."/>
            <person name="Down T."/>
            <person name="Engstrom P."/>
            <person name="Fagiolini M."/>
            <person name="Faulkner G."/>
            <person name="Fletcher C.F."/>
            <person name="Fukushima T."/>
            <person name="Furuno M."/>
            <person name="Futaki S."/>
            <person name="Gariboldi M."/>
            <person name="Georgii-Hemming P."/>
            <person name="Gingeras T.R."/>
            <person name="Gojobori T."/>
            <person name="Green R.E."/>
            <person name="Gustincich S."/>
            <person name="Harbers M."/>
            <person name="Hayashi Y."/>
            <person name="Hensch T.K."/>
            <person name="Hirokawa N."/>
            <person name="Hill D."/>
            <person name="Huminiecki L."/>
            <person name="Iacono M."/>
            <person name="Ikeo K."/>
            <person name="Iwama A."/>
            <person name="Ishikawa T."/>
            <person name="Jakt M."/>
            <person name="Kanapin A."/>
            <person name="Katoh M."/>
            <person name="Kawasawa Y."/>
            <person name="Kelso J."/>
            <person name="Kitamura H."/>
            <person name="Kitano H."/>
            <person name="Kollias G."/>
            <person name="Krishnan S.P."/>
            <person name="Kruger A."/>
            <person name="Kummerfeld S.K."/>
            <person name="Kurochkin I.V."/>
            <person name="Lareau L.F."/>
            <person name="Lazarevic D."/>
            <person name="Lipovich L."/>
            <person name="Liu J."/>
            <person name="Liuni S."/>
            <person name="McWilliam S."/>
            <person name="Madan Babu M."/>
            <person name="Madera M."/>
            <person name="Marchionni L."/>
            <person name="Matsuda H."/>
            <person name="Matsuzawa S."/>
            <person name="Miki H."/>
            <person name="Mignone F."/>
            <person name="Miyake S."/>
            <person name="Morris K."/>
            <person name="Mottagui-Tabar S."/>
            <person name="Mulder N."/>
            <person name="Nakano N."/>
            <person name="Nakauchi H."/>
            <person name="Ng P."/>
            <person name="Nilsson R."/>
            <person name="Nishiguchi S."/>
            <person name="Nishikawa S."/>
            <person name="Nori F."/>
            <person name="Ohara O."/>
            <person name="Okazaki Y."/>
            <person name="Orlando V."/>
            <person name="Pang K.C."/>
            <person name="Pavan W.J."/>
            <person name="Pavesi G."/>
            <person name="Pesole G."/>
            <person name="Petrovsky N."/>
            <person name="Piazza S."/>
            <person name="Reed J."/>
            <person name="Reid J.F."/>
            <person name="Ring B.Z."/>
            <person name="Ringwald M."/>
            <person name="Rost B."/>
            <person name="Ruan Y."/>
            <person name="Salzberg S.L."/>
            <person name="Sandelin A."/>
            <person name="Schneider C."/>
            <person name="Schoenbach C."/>
            <person name="Sekiguchi K."/>
            <person name="Semple C.A."/>
            <person name="Seno S."/>
            <person name="Sessa L."/>
            <person name="Sheng Y."/>
            <person name="Shibata Y."/>
            <person name="Shimada H."/>
            <person name="Shimada K."/>
            <person name="Silva D."/>
            <person name="Sinclair B."/>
            <person name="Sperling S."/>
            <person name="Stupka E."/>
            <person name="Sugiura K."/>
            <person name="Sultana R."/>
            <person name="Takenaka Y."/>
            <person name="Taki K."/>
            <person name="Tammoja K."/>
            <person name="Tan S.L."/>
            <person name="Tang S."/>
            <person name="Taylor M.S."/>
            <person name="Tegner J."/>
            <person name="Teichmann S.A."/>
            <person name="Ueda H.R."/>
            <person name="van Nimwegen E."/>
            <person name="Verardo R."/>
            <person name="Wei C.L."/>
            <person name="Yagi K."/>
            <person name="Yamanishi H."/>
            <person name="Zabarovsky E."/>
            <person name="Zhu S."/>
            <person name="Zimmer A."/>
            <person name="Hide W."/>
            <person name="Bult C."/>
            <person name="Grimmond S.M."/>
            <person name="Teasdale R.D."/>
            <person name="Liu E.T."/>
            <person name="Brusic V."/>
            <person name="Quackenbush J."/>
            <person name="Wahlestedt C."/>
            <person name="Mattick J.S."/>
            <person name="Hume D.A."/>
            <person name="Kai C."/>
            <person name="Sasaki D."/>
            <person name="Tomaru Y."/>
            <person name="Fukuda S."/>
            <person name="Kanamori-Katayama M."/>
            <person name="Suzuki M."/>
            <person name="Aoki J."/>
            <person name="Arakawa T."/>
            <person name="Iida J."/>
            <person name="Imamura K."/>
            <person name="Itoh M."/>
            <person name="Kato T."/>
            <person name="Kawaji H."/>
            <person name="Kawagashira N."/>
            <person name="Kawashima T."/>
            <person name="Kojima M."/>
            <person name="Kondo S."/>
            <person name="Konno H."/>
            <person name="Nakano K."/>
            <person name="Ninomiya N."/>
            <person name="Nishio T."/>
            <person name="Okada M."/>
            <person name="Plessy C."/>
            <person name="Shibata K."/>
            <person name="Shiraki T."/>
            <person name="Suzuki S."/>
            <person name="Tagami M."/>
            <person name="Waki K."/>
            <person name="Watahiki A."/>
            <person name="Okamura-Oho Y."/>
            <person name="Suzuki H."/>
            <person name="Kawai J."/>
            <person name="Hayashizaki Y."/>
        </authorList>
    </citation>
    <scope>NUCLEOTIDE SEQUENCE [LARGE SCALE MRNA] (ISOFORMS 1 AND 2)</scope>
    <source>
        <strain>C57BL/6J</strain>
        <tissue>Corpora quadrigemina</tissue>
        <tissue>Hypothalamus</tissue>
    </source>
</reference>
<reference key="3">
    <citation type="journal article" date="1995" name="Proc. Natl. Acad. Sci. U.S.A.">
        <title>T-cell-specific deletion of a polypeptide N-acetylgalactosaminyl-transferase gene by site-directed recombination.</title>
        <authorList>
            <person name="Hennet T."/>
            <person name="Hagen F.K."/>
            <person name="Tabak L.A."/>
            <person name="Marth J.D."/>
        </authorList>
    </citation>
    <scope>FUNCTION</scope>
    <scope>CATALYTIC ACTIVITY</scope>
    <scope>DISRUPTION PHENOTYPE</scope>
</reference>
<reference key="4">
    <citation type="journal article" date="2003" name="Glycobiology">
        <title>Expression of UDP-GalNAc:polypeptide N-acetylgalactosaminyltransferase isoforms in murine tissues determined by real-time PCR: a new view of a large family.</title>
        <authorList>
            <person name="Young W.W. Jr."/>
            <person name="Holcomb D.R."/>
            <person name="Ten Hagen K.G."/>
            <person name="Tabak L.A."/>
        </authorList>
    </citation>
    <scope>TISSUE SPECIFICITY</scope>
</reference>
<reference key="5">
    <citation type="journal article" date="2016" name="J. Biol. Chem.">
        <title>Polypeptide N-Acetylgalactosaminyltransferase 13 Contributes to Neurogenesis via Stabilizing the Mucin-type O-Glycoprotein Podoplanin.</title>
        <authorList>
            <person name="Xu Y."/>
            <person name="Pang W."/>
            <person name="Lu J."/>
            <person name="Shan A."/>
            <person name="Zhang Y."/>
        </authorList>
    </citation>
    <scope>FUNCTION</scope>
    <scope>CATALYTIC ACTIVITY</scope>
    <scope>DEVELOPMENTAL STAGE</scope>
</reference>
<keyword id="KW-0025">Alternative splicing</keyword>
<keyword id="KW-1015">Disulfide bond</keyword>
<keyword id="KW-0325">Glycoprotein</keyword>
<keyword id="KW-0328">Glycosyltransferase</keyword>
<keyword id="KW-0333">Golgi apparatus</keyword>
<keyword id="KW-0430">Lectin</keyword>
<keyword id="KW-0464">Manganese</keyword>
<keyword id="KW-0472">Membrane</keyword>
<keyword id="KW-0479">Metal-binding</keyword>
<keyword id="KW-1185">Reference proteome</keyword>
<keyword id="KW-0735">Signal-anchor</keyword>
<keyword id="KW-0808">Transferase</keyword>
<keyword id="KW-0812">Transmembrane</keyword>
<keyword id="KW-1133">Transmembrane helix</keyword>